<gene>
    <name type="primary">RNA2</name>
</gene>
<protein>
    <recommendedName>
        <fullName>Genome polyprotein 2</fullName>
    </recommendedName>
    <component>
        <recommendedName>
            <fullName>Helper component proteinase</fullName>
            <shortName>HC-pro</shortName>
            <ecNumber>3.4.22.45</ecNumber>
        </recommendedName>
    </component>
    <component>
        <recommendedName>
            <fullName>70 kDa protein</fullName>
        </recommendedName>
    </component>
</protein>
<comment type="catalytic activity">
    <reaction>
        <text>Hydrolyzes a Gly-|-Gly bond at its own C-terminus, commonly in the sequence -Tyr-Xaa-Val-Gly-|-Gly, in the processing of the potyviral polyprotein.</text>
        <dbReference type="EC" id="3.4.22.45"/>
    </reaction>
</comment>
<comment type="PTM">
    <text evidence="4">The viral RNA2 of bymoviruses is expressed as a single polyprotein which undergoes post-translational proteolytic processing resulting in the production of at least two individual proteins. The HC-pro cleaves its C-terminus autocatalytically (Potential).</text>
</comment>
<comment type="similarity">
    <text evidence="4">Belongs to the bymoviruses polyprotein 2 family.</text>
</comment>
<dbReference type="EC" id="3.4.22.45"/>
<dbReference type="EMBL" id="D83409">
    <property type="protein sequence ID" value="BAA18954.1"/>
    <property type="molecule type" value="Genomic_RNA"/>
</dbReference>
<dbReference type="SMR" id="P89684"/>
<dbReference type="MEROPS" id="C06.002"/>
<dbReference type="Proteomes" id="UP000007444">
    <property type="component" value="Genome"/>
</dbReference>
<dbReference type="GO" id="GO:0004197">
    <property type="term" value="F:cysteine-type endopeptidase activity"/>
    <property type="evidence" value="ECO:0007669"/>
    <property type="project" value="InterPro"/>
</dbReference>
<dbReference type="GO" id="GO:0005198">
    <property type="term" value="F:structural molecule activity"/>
    <property type="evidence" value="ECO:0007669"/>
    <property type="project" value="InterPro"/>
</dbReference>
<dbReference type="GO" id="GO:0006508">
    <property type="term" value="P:proteolysis"/>
    <property type="evidence" value="ECO:0007669"/>
    <property type="project" value="UniProtKB-KW"/>
</dbReference>
<dbReference type="Gene3D" id="3.90.70.150">
    <property type="entry name" value="Helper component proteinase"/>
    <property type="match status" value="1"/>
</dbReference>
<dbReference type="Gene3D" id="1.20.120.70">
    <property type="entry name" value="Tobacco mosaic virus-like, coat protein"/>
    <property type="match status" value="1"/>
</dbReference>
<dbReference type="InterPro" id="IPR001456">
    <property type="entry name" value="HC-pro"/>
</dbReference>
<dbReference type="InterPro" id="IPR031159">
    <property type="entry name" value="HC_PRO_CPD_dom"/>
</dbReference>
<dbReference type="InterPro" id="IPR042308">
    <property type="entry name" value="HC_PRO_CPD_sf"/>
</dbReference>
<dbReference type="InterPro" id="IPR001337">
    <property type="entry name" value="TMV-like_coat"/>
</dbReference>
<dbReference type="InterPro" id="IPR036417">
    <property type="entry name" value="TMV-like_coat_sf"/>
</dbReference>
<dbReference type="Pfam" id="PF00851">
    <property type="entry name" value="Peptidase_C6"/>
    <property type="match status" value="1"/>
</dbReference>
<dbReference type="Pfam" id="PF00721">
    <property type="entry name" value="TMV_coat"/>
    <property type="match status" value="1"/>
</dbReference>
<dbReference type="SUPFAM" id="SSF47195">
    <property type="entry name" value="TMV-like viral coat proteins"/>
    <property type="match status" value="1"/>
</dbReference>
<dbReference type="PROSITE" id="PS51744">
    <property type="entry name" value="HC_PRO_CPD"/>
    <property type="match status" value="1"/>
</dbReference>
<name>POL2_BAMMN</name>
<sequence length="891" mass="97943">MMMNSTIRQGWQQVLKRFSIPASGDRLIISNPTDQPIGLFGAFDTSLQTLSQVGDDPEVLKQKIHIPTHLDIASALEASPRSFPWIFLTNSFCTFGGSIHAQNLQAFATAEFKSGFCYMNLLVPLSFDIIDAHADSFRVFVEQLPDMLGAYPSLSMVLNVMLHAATRFPEIVSSPVPTIAFDAESLQFHVTDKRGVPGMWNILKAGRVYELLSLAADGVGCEYMLYPVGAAPQYSFWKKSMDHFTSDRFVEFLAMQNLLASALEQDYTTHDALDALLAALQNAGYTNVVARERRFPNGHDPSTVWLNLSEAPISEKLTDLKRYLLVGHRSDDTADITHNVHQYVFEVLKTMSVQFSKRTNAYNRARFEVNHKVIWNAEYGRGPQQNAELEALVLFLNRQSLEIENILHRTTSPVVVTNWQPDVPTAAPEVSEGEPTHAVATPMTEAPAHATPVEVVNLPSTRSYWAETLVGVLTAVLGTIFALLTRALIRAKRLRRKPTFPWVTLDSGDEDDDHSGGGGGGPQTPGGQPPASPAHRTHQSRLSVQDIASDTSLLSVDLDEDTLSQYDETFQRIRRALFETSFTDILQNSARWISALEAMALADGNAPYTLLAQYLNGIEEAYTSFRNTGHVSRATLSSFFALEDSLRAAGIAFGATTPTQTIQNQFADSPARRWKTRFEQIACELGDASIKSLADLADIIDTERERSDLTQFDVLAASSISSLCRAVRIISDTTDPDAQLALVENATAMQNNINAILGTNVSIPFLSATRRLLVTRRIQQAGAENRSGATPETIQQLADAELIVSEANMFNEMATSQRDIANATQEATIREHVLSPVNALANVGMAAAFFRSGGMRSRALHPAMPTMPGVSAATGRPIFQAFRGRGHRLNR</sequence>
<evidence type="ECO:0000255" key="1"/>
<evidence type="ECO:0000255" key="2">
    <source>
        <dbReference type="PROSITE-ProRule" id="PRU01080"/>
    </source>
</evidence>
<evidence type="ECO:0000256" key="3">
    <source>
        <dbReference type="SAM" id="MobiDB-lite"/>
    </source>
</evidence>
<evidence type="ECO:0000305" key="4"/>
<keyword id="KW-0378">Hydrolase</keyword>
<keyword id="KW-0645">Protease</keyword>
<keyword id="KW-0788">Thiol protease</keyword>
<proteinExistence type="inferred from homology"/>
<reference key="1">
    <citation type="journal article" date="1996" name="Arch. Virol.">
        <title>The complete nucleotide sequence and genome organization of barley mild mosaic virus (Na1 strain).</title>
        <authorList>
            <person name="Kashiwazaki S."/>
        </authorList>
    </citation>
    <scope>NUCLEOTIDE SEQUENCE [GENOMIC RNA]</scope>
</reference>
<organismHost>
    <name type="scientific">Hordeum vulgare</name>
    <name type="common">Barley</name>
    <dbReference type="NCBI Taxonomy" id="4513"/>
</organismHost>
<organism>
    <name type="scientific">Barley mild mosaic virus (strain Na1)</name>
    <name type="common">BaMMV</name>
    <dbReference type="NCBI Taxonomy" id="103900"/>
    <lineage>
        <taxon>Viruses</taxon>
        <taxon>Riboviria</taxon>
        <taxon>Orthornavirae</taxon>
        <taxon>Pisuviricota</taxon>
        <taxon>Stelpaviricetes</taxon>
        <taxon>Patatavirales</taxon>
        <taxon>Potyviridae</taxon>
        <taxon>Bymovirus</taxon>
        <taxon>Barley mild mosaic virus</taxon>
    </lineage>
</organism>
<feature type="chain" id="PRO_0000040560" description="Helper component proteinase" evidence="1">
    <location>
        <begin position="1"/>
        <end position="229"/>
    </location>
</feature>
<feature type="chain" id="PRO_0000040561" description="70 kDa protein">
    <location>
        <begin position="230"/>
        <end position="891"/>
    </location>
</feature>
<feature type="domain" description="Peptidase C6" evidence="2">
    <location>
        <begin position="109"/>
        <end position="229"/>
    </location>
</feature>
<feature type="region of interest" description="Disordered" evidence="3">
    <location>
        <begin position="502"/>
        <end position="540"/>
    </location>
</feature>
<feature type="active site" description="For helper component proteinase activity" evidence="2">
    <location>
        <position position="117"/>
    </location>
</feature>
<feature type="active site" description="For helper component proteinase activity" evidence="2">
    <location>
        <position position="189"/>
    </location>
</feature>
<feature type="site" description="Cleavage; by autolysis" evidence="2">
    <location>
        <begin position="229"/>
        <end position="230"/>
    </location>
</feature>
<accession>P89684</accession>